<reference key="1">
    <citation type="journal article" date="2004" name="Mol. Plant Microbe Interact.">
        <title>The genome sequence of the Gram-positive sugarcane pathogen Leifsonia xyli subsp. xyli.</title>
        <authorList>
            <person name="Monteiro-Vitorello C.B."/>
            <person name="Camargo L.E.A."/>
            <person name="Van Sluys M.A."/>
            <person name="Kitajima J.P."/>
            <person name="Truffi D."/>
            <person name="do Amaral A.M."/>
            <person name="Harakava R."/>
            <person name="de Oliveira J.C.F."/>
            <person name="Wood D."/>
            <person name="de Oliveira M.C."/>
            <person name="Miyaki C.Y."/>
            <person name="Takita M.A."/>
            <person name="da Silva A.C.R."/>
            <person name="Furlan L.R."/>
            <person name="Carraro D.M."/>
            <person name="Camarotte G."/>
            <person name="Almeida N.F. Jr."/>
            <person name="Carrer H."/>
            <person name="Coutinho L.L."/>
            <person name="El-Dorry H.A."/>
            <person name="Ferro M.I.T."/>
            <person name="Gagliardi P.R."/>
            <person name="Giglioti E."/>
            <person name="Goldman M.H.S."/>
            <person name="Goldman G.H."/>
            <person name="Kimura E.T."/>
            <person name="Ferro E.S."/>
            <person name="Kuramae E.E."/>
            <person name="Lemos E.G.M."/>
            <person name="Lemos M.V.F."/>
            <person name="Mauro S.M.Z."/>
            <person name="Machado M.A."/>
            <person name="Marino C.L."/>
            <person name="Menck C.F."/>
            <person name="Nunes L.R."/>
            <person name="Oliveira R.C."/>
            <person name="Pereira G.G."/>
            <person name="Siqueira W."/>
            <person name="de Souza A.A."/>
            <person name="Tsai S.M."/>
            <person name="Zanca A.S."/>
            <person name="Simpson A.J.G."/>
            <person name="Brumbley S.M."/>
            <person name="Setubal J.C."/>
        </authorList>
    </citation>
    <scope>NUCLEOTIDE SEQUENCE [LARGE SCALE GENOMIC DNA]</scope>
    <source>
        <strain>CTCB07</strain>
    </source>
</reference>
<sequence>MRVTHLSLTDFRNYGTAEVHFEAGANLFVGRNGQGKTNLVESLGYLSALGSHRVSSDQAMIRQGAELAVVRARIQHEARELLVEVQLNRGAANRAQVNRAAIKPRELPRYFSSVLFAPEDLALVRGEPGVRRRFLDQLLIQRNPRLSAVIAEYERVLKQRNTLLKSARASRFREDQLGTLDIWDDRLLTLGAELINARLDLMARLSNPLVAAYRSVAGDDHHPRLLPQLTISGAHVEDEDDDSVADMTSAFGDTTDVFRQALAGVRWKELERGLTLVGPHRDDVLFELNGLPAKGYASHGESWSFALALKLASAELLRRESVTGDPVLILDDVFAELDWARRRMLATTVAGYEQVLITAAVYEDVPAELAAHTIRIEAGAIVEPS</sequence>
<keyword id="KW-0067">ATP-binding</keyword>
<keyword id="KW-0963">Cytoplasm</keyword>
<keyword id="KW-0227">DNA damage</keyword>
<keyword id="KW-0234">DNA repair</keyword>
<keyword id="KW-0235">DNA replication</keyword>
<keyword id="KW-0238">DNA-binding</keyword>
<keyword id="KW-0547">Nucleotide-binding</keyword>
<keyword id="KW-1185">Reference proteome</keyword>
<keyword id="KW-0742">SOS response</keyword>
<evidence type="ECO:0000255" key="1">
    <source>
        <dbReference type="HAMAP-Rule" id="MF_00365"/>
    </source>
</evidence>
<feature type="chain" id="PRO_0000196425" description="DNA replication and repair protein RecF">
    <location>
        <begin position="1"/>
        <end position="385"/>
    </location>
</feature>
<feature type="binding site" evidence="1">
    <location>
        <begin position="30"/>
        <end position="37"/>
    </location>
    <ligand>
        <name>ATP</name>
        <dbReference type="ChEBI" id="CHEBI:30616"/>
    </ligand>
</feature>
<proteinExistence type="inferred from homology"/>
<comment type="function">
    <text evidence="1">The RecF protein is involved in DNA metabolism; it is required for DNA replication and normal SOS inducibility. RecF binds preferentially to single-stranded, linear DNA. It also seems to bind ATP.</text>
</comment>
<comment type="subcellular location">
    <subcellularLocation>
        <location evidence="1">Cytoplasm</location>
    </subcellularLocation>
</comment>
<comment type="similarity">
    <text evidence="1">Belongs to the RecF family.</text>
</comment>
<protein>
    <recommendedName>
        <fullName evidence="1">DNA replication and repair protein RecF</fullName>
    </recommendedName>
</protein>
<gene>
    <name evidence="1" type="primary">recF</name>
    <name type="ordered locus">Lxx00040</name>
</gene>
<name>RECF_LEIXX</name>
<accession>Q6AHN3</accession>
<organism>
    <name type="scientific">Leifsonia xyli subsp. xyli (strain CTCB07)</name>
    <dbReference type="NCBI Taxonomy" id="281090"/>
    <lineage>
        <taxon>Bacteria</taxon>
        <taxon>Bacillati</taxon>
        <taxon>Actinomycetota</taxon>
        <taxon>Actinomycetes</taxon>
        <taxon>Micrococcales</taxon>
        <taxon>Microbacteriaceae</taxon>
        <taxon>Leifsonia</taxon>
    </lineage>
</organism>
<dbReference type="EMBL" id="AE016822">
    <property type="protein sequence ID" value="AAT88112.1"/>
    <property type="molecule type" value="Genomic_DNA"/>
</dbReference>
<dbReference type="RefSeq" id="WP_011185117.1">
    <property type="nucleotide sequence ID" value="NC_006087.1"/>
</dbReference>
<dbReference type="SMR" id="Q6AHN3"/>
<dbReference type="STRING" id="281090.Lxx00040"/>
<dbReference type="KEGG" id="lxx:Lxx00040"/>
<dbReference type="eggNOG" id="COG1195">
    <property type="taxonomic scope" value="Bacteria"/>
</dbReference>
<dbReference type="HOGENOM" id="CLU_040267_1_1_11"/>
<dbReference type="Proteomes" id="UP000001306">
    <property type="component" value="Chromosome"/>
</dbReference>
<dbReference type="GO" id="GO:0005737">
    <property type="term" value="C:cytoplasm"/>
    <property type="evidence" value="ECO:0007669"/>
    <property type="project" value="UniProtKB-SubCell"/>
</dbReference>
<dbReference type="GO" id="GO:0005524">
    <property type="term" value="F:ATP binding"/>
    <property type="evidence" value="ECO:0007669"/>
    <property type="project" value="UniProtKB-UniRule"/>
</dbReference>
<dbReference type="GO" id="GO:0003697">
    <property type="term" value="F:single-stranded DNA binding"/>
    <property type="evidence" value="ECO:0007669"/>
    <property type="project" value="UniProtKB-UniRule"/>
</dbReference>
<dbReference type="GO" id="GO:0006260">
    <property type="term" value="P:DNA replication"/>
    <property type="evidence" value="ECO:0007669"/>
    <property type="project" value="UniProtKB-UniRule"/>
</dbReference>
<dbReference type="GO" id="GO:0000731">
    <property type="term" value="P:DNA synthesis involved in DNA repair"/>
    <property type="evidence" value="ECO:0007669"/>
    <property type="project" value="TreeGrafter"/>
</dbReference>
<dbReference type="GO" id="GO:0006302">
    <property type="term" value="P:double-strand break repair"/>
    <property type="evidence" value="ECO:0007669"/>
    <property type="project" value="TreeGrafter"/>
</dbReference>
<dbReference type="GO" id="GO:0009432">
    <property type="term" value="P:SOS response"/>
    <property type="evidence" value="ECO:0007669"/>
    <property type="project" value="UniProtKB-UniRule"/>
</dbReference>
<dbReference type="Gene3D" id="3.40.50.300">
    <property type="entry name" value="P-loop containing nucleotide triphosphate hydrolases"/>
    <property type="match status" value="1"/>
</dbReference>
<dbReference type="Gene3D" id="1.20.1050.90">
    <property type="entry name" value="RecF/RecN/SMC, N-terminal domain"/>
    <property type="match status" value="1"/>
</dbReference>
<dbReference type="HAMAP" id="MF_00365">
    <property type="entry name" value="RecF"/>
    <property type="match status" value="1"/>
</dbReference>
<dbReference type="InterPro" id="IPR001238">
    <property type="entry name" value="DNA-binding_RecF"/>
</dbReference>
<dbReference type="InterPro" id="IPR018078">
    <property type="entry name" value="DNA-binding_RecF_CS"/>
</dbReference>
<dbReference type="InterPro" id="IPR027417">
    <property type="entry name" value="P-loop_NTPase"/>
</dbReference>
<dbReference type="InterPro" id="IPR003395">
    <property type="entry name" value="RecF/RecN/SMC_N"/>
</dbReference>
<dbReference type="InterPro" id="IPR042174">
    <property type="entry name" value="RecF_2"/>
</dbReference>
<dbReference type="NCBIfam" id="TIGR00611">
    <property type="entry name" value="recf"/>
    <property type="match status" value="1"/>
</dbReference>
<dbReference type="PANTHER" id="PTHR32182">
    <property type="entry name" value="DNA REPLICATION AND REPAIR PROTEIN RECF"/>
    <property type="match status" value="1"/>
</dbReference>
<dbReference type="PANTHER" id="PTHR32182:SF0">
    <property type="entry name" value="DNA REPLICATION AND REPAIR PROTEIN RECF"/>
    <property type="match status" value="1"/>
</dbReference>
<dbReference type="Pfam" id="PF02463">
    <property type="entry name" value="SMC_N"/>
    <property type="match status" value="1"/>
</dbReference>
<dbReference type="SUPFAM" id="SSF52540">
    <property type="entry name" value="P-loop containing nucleoside triphosphate hydrolases"/>
    <property type="match status" value="1"/>
</dbReference>
<dbReference type="PROSITE" id="PS00617">
    <property type="entry name" value="RECF_1"/>
    <property type="match status" value="1"/>
</dbReference>
<dbReference type="PROSITE" id="PS00618">
    <property type="entry name" value="RECF_2"/>
    <property type="match status" value="1"/>
</dbReference>